<keyword id="KW-1185">Reference proteome</keyword>
<keyword id="KW-0687">Ribonucleoprotein</keyword>
<keyword id="KW-0689">Ribosomal protein</keyword>
<reference key="1">
    <citation type="journal article" date="2008" name="Appl. Environ. Microbiol.">
        <title>The genome of Polaromonas sp. strain JS666: insights into the evolution of a hydrocarbon- and xenobiotic-degrading bacterium, and features of relevance to biotechnology.</title>
        <authorList>
            <person name="Mattes T.E."/>
            <person name="Alexander A.K."/>
            <person name="Richardson P.M."/>
            <person name="Munk A.C."/>
            <person name="Han C.S."/>
            <person name="Stothard P."/>
            <person name="Coleman N.V."/>
        </authorList>
    </citation>
    <scope>NUCLEOTIDE SEQUENCE [LARGE SCALE GENOMIC DNA]</scope>
    <source>
        <strain>JS666 / ATCC BAA-500</strain>
    </source>
</reference>
<organism>
    <name type="scientific">Polaromonas sp. (strain JS666 / ATCC BAA-500)</name>
    <dbReference type="NCBI Taxonomy" id="296591"/>
    <lineage>
        <taxon>Bacteria</taxon>
        <taxon>Pseudomonadati</taxon>
        <taxon>Pseudomonadota</taxon>
        <taxon>Betaproteobacteria</taxon>
        <taxon>Burkholderiales</taxon>
        <taxon>Comamonadaceae</taxon>
        <taxon>Polaromonas</taxon>
    </lineage>
</organism>
<accession>Q124N6</accession>
<feature type="chain" id="PRO_1000055432" description="Large ribosomal subunit protein uL13">
    <location>
        <begin position="1"/>
        <end position="142"/>
    </location>
</feature>
<sequence>MKTFSAKPADVTHEWFVIDATDKVLGRVASEVALRLRGKHKAIYTPHVDTGDFIVIINAAQLRVTGAKALDKMYYRHSGYPGGITATNFRDMQAKHPGRALEKAVKGMLPKGPLGYAMIKKLKVYGGAEHPHTAQQPKVLDI</sequence>
<evidence type="ECO:0000255" key="1">
    <source>
        <dbReference type="HAMAP-Rule" id="MF_01366"/>
    </source>
</evidence>
<evidence type="ECO:0000305" key="2"/>
<comment type="function">
    <text evidence="1">This protein is one of the early assembly proteins of the 50S ribosomal subunit, although it is not seen to bind rRNA by itself. It is important during the early stages of 50S assembly.</text>
</comment>
<comment type="subunit">
    <text evidence="1">Part of the 50S ribosomal subunit.</text>
</comment>
<comment type="similarity">
    <text evidence="1">Belongs to the universal ribosomal protein uL13 family.</text>
</comment>
<proteinExistence type="inferred from homology"/>
<gene>
    <name evidence="1" type="primary">rplM</name>
    <name type="ordered locus">Bpro_4113</name>
</gene>
<dbReference type="EMBL" id="CP000316">
    <property type="protein sequence ID" value="ABE46006.1"/>
    <property type="molecule type" value="Genomic_DNA"/>
</dbReference>
<dbReference type="RefSeq" id="WP_011484995.1">
    <property type="nucleotide sequence ID" value="NC_007948.1"/>
</dbReference>
<dbReference type="SMR" id="Q124N6"/>
<dbReference type="STRING" id="296591.Bpro_4113"/>
<dbReference type="KEGG" id="pol:Bpro_4113"/>
<dbReference type="eggNOG" id="COG0102">
    <property type="taxonomic scope" value="Bacteria"/>
</dbReference>
<dbReference type="HOGENOM" id="CLU_082184_2_2_4"/>
<dbReference type="OrthoDB" id="9801330at2"/>
<dbReference type="Proteomes" id="UP000001983">
    <property type="component" value="Chromosome"/>
</dbReference>
<dbReference type="GO" id="GO:0022625">
    <property type="term" value="C:cytosolic large ribosomal subunit"/>
    <property type="evidence" value="ECO:0007669"/>
    <property type="project" value="TreeGrafter"/>
</dbReference>
<dbReference type="GO" id="GO:0003729">
    <property type="term" value="F:mRNA binding"/>
    <property type="evidence" value="ECO:0007669"/>
    <property type="project" value="TreeGrafter"/>
</dbReference>
<dbReference type="GO" id="GO:0003735">
    <property type="term" value="F:structural constituent of ribosome"/>
    <property type="evidence" value="ECO:0007669"/>
    <property type="project" value="InterPro"/>
</dbReference>
<dbReference type="GO" id="GO:0017148">
    <property type="term" value="P:negative regulation of translation"/>
    <property type="evidence" value="ECO:0007669"/>
    <property type="project" value="TreeGrafter"/>
</dbReference>
<dbReference type="GO" id="GO:0006412">
    <property type="term" value="P:translation"/>
    <property type="evidence" value="ECO:0007669"/>
    <property type="project" value="UniProtKB-UniRule"/>
</dbReference>
<dbReference type="CDD" id="cd00392">
    <property type="entry name" value="Ribosomal_L13"/>
    <property type="match status" value="1"/>
</dbReference>
<dbReference type="FunFam" id="3.90.1180.10:FF:000001">
    <property type="entry name" value="50S ribosomal protein L13"/>
    <property type="match status" value="1"/>
</dbReference>
<dbReference type="Gene3D" id="3.90.1180.10">
    <property type="entry name" value="Ribosomal protein L13"/>
    <property type="match status" value="1"/>
</dbReference>
<dbReference type="HAMAP" id="MF_01366">
    <property type="entry name" value="Ribosomal_uL13"/>
    <property type="match status" value="1"/>
</dbReference>
<dbReference type="InterPro" id="IPR005822">
    <property type="entry name" value="Ribosomal_uL13"/>
</dbReference>
<dbReference type="InterPro" id="IPR005823">
    <property type="entry name" value="Ribosomal_uL13_bac-type"/>
</dbReference>
<dbReference type="InterPro" id="IPR036899">
    <property type="entry name" value="Ribosomal_uL13_sf"/>
</dbReference>
<dbReference type="NCBIfam" id="TIGR01066">
    <property type="entry name" value="rplM_bact"/>
    <property type="match status" value="1"/>
</dbReference>
<dbReference type="PANTHER" id="PTHR11545:SF2">
    <property type="entry name" value="LARGE RIBOSOMAL SUBUNIT PROTEIN UL13M"/>
    <property type="match status" value="1"/>
</dbReference>
<dbReference type="PANTHER" id="PTHR11545">
    <property type="entry name" value="RIBOSOMAL PROTEIN L13"/>
    <property type="match status" value="1"/>
</dbReference>
<dbReference type="Pfam" id="PF00572">
    <property type="entry name" value="Ribosomal_L13"/>
    <property type="match status" value="1"/>
</dbReference>
<dbReference type="PIRSF" id="PIRSF002181">
    <property type="entry name" value="Ribosomal_L13"/>
    <property type="match status" value="1"/>
</dbReference>
<dbReference type="SUPFAM" id="SSF52161">
    <property type="entry name" value="Ribosomal protein L13"/>
    <property type="match status" value="1"/>
</dbReference>
<name>RL13_POLSJ</name>
<protein>
    <recommendedName>
        <fullName evidence="1">Large ribosomal subunit protein uL13</fullName>
    </recommendedName>
    <alternativeName>
        <fullName evidence="2">50S ribosomal protein L13</fullName>
    </alternativeName>
</protein>